<dbReference type="EC" id="1.14.99.1"/>
<dbReference type="EMBL" id="U97696">
    <property type="protein sequence ID" value="AAB71222.1"/>
    <property type="molecule type" value="mRNA"/>
</dbReference>
<dbReference type="RefSeq" id="NP_001075857.1">
    <property type="nucleotide sequence ID" value="NM_001082388.1"/>
</dbReference>
<dbReference type="SMR" id="O02768"/>
<dbReference type="FunCoup" id="O02768">
    <property type="interactions" value="85"/>
</dbReference>
<dbReference type="STRING" id="9986.ENSOCUP00000014415"/>
<dbReference type="BindingDB" id="O02768"/>
<dbReference type="ChEMBL" id="CHEMBL1293198"/>
<dbReference type="DrugCentral" id="O02768"/>
<dbReference type="PeroxiBase" id="4130">
    <property type="entry name" value="OcuPGHS02"/>
</dbReference>
<dbReference type="GlyCosmos" id="O02768">
    <property type="glycosylation" value="4 sites, No reported glycans"/>
</dbReference>
<dbReference type="PaxDb" id="9986-ENSOCUP00000014415"/>
<dbReference type="Ensembl" id="ENSOCUT00000016770.2">
    <property type="protein sequence ID" value="ENSOCUP00000014415.2"/>
    <property type="gene ID" value="ENSOCUG00000016771.4"/>
</dbReference>
<dbReference type="GeneID" id="100009248"/>
<dbReference type="KEGG" id="ocu:100009248"/>
<dbReference type="CTD" id="5743"/>
<dbReference type="eggNOG" id="KOG2408">
    <property type="taxonomic scope" value="Eukaryota"/>
</dbReference>
<dbReference type="GeneTree" id="ENSGT00390000010743"/>
<dbReference type="InParanoid" id="O02768"/>
<dbReference type="OMA" id="MIYPPHI"/>
<dbReference type="OrthoDB" id="823504at2759"/>
<dbReference type="TreeFam" id="TF329675"/>
<dbReference type="UniPathway" id="UPA00662"/>
<dbReference type="Proteomes" id="UP000001811">
    <property type="component" value="Chromosome 16"/>
</dbReference>
<dbReference type="Bgee" id="ENSOCUG00000016771">
    <property type="expression patterns" value="Expressed in ovary and 14 other cell types or tissues"/>
</dbReference>
<dbReference type="GO" id="GO:0005737">
    <property type="term" value="C:cytoplasm"/>
    <property type="evidence" value="ECO:0000250"/>
    <property type="project" value="UniProtKB"/>
</dbReference>
<dbReference type="GO" id="GO:0005829">
    <property type="term" value="C:cytosol"/>
    <property type="evidence" value="ECO:0007669"/>
    <property type="project" value="Ensembl"/>
</dbReference>
<dbReference type="GO" id="GO:0005789">
    <property type="term" value="C:endoplasmic reticulum membrane"/>
    <property type="evidence" value="ECO:0007669"/>
    <property type="project" value="UniProtKB-SubCell"/>
</dbReference>
<dbReference type="GO" id="GO:0043005">
    <property type="term" value="C:neuron projection"/>
    <property type="evidence" value="ECO:0007669"/>
    <property type="project" value="Ensembl"/>
</dbReference>
<dbReference type="GO" id="GO:0005637">
    <property type="term" value="C:nuclear inner membrane"/>
    <property type="evidence" value="ECO:0000250"/>
    <property type="project" value="UniProtKB"/>
</dbReference>
<dbReference type="GO" id="GO:0005640">
    <property type="term" value="C:nuclear outer membrane"/>
    <property type="evidence" value="ECO:0000250"/>
    <property type="project" value="UniProtKB"/>
</dbReference>
<dbReference type="GO" id="GO:0019899">
    <property type="term" value="F:enzyme binding"/>
    <property type="evidence" value="ECO:0007669"/>
    <property type="project" value="Ensembl"/>
</dbReference>
<dbReference type="GO" id="GO:0020037">
    <property type="term" value="F:heme binding"/>
    <property type="evidence" value="ECO:0000250"/>
    <property type="project" value="UniProtKB"/>
</dbReference>
<dbReference type="GO" id="GO:0046872">
    <property type="term" value="F:metal ion binding"/>
    <property type="evidence" value="ECO:0007669"/>
    <property type="project" value="UniProtKB-KW"/>
</dbReference>
<dbReference type="GO" id="GO:0016702">
    <property type="term" value="F:oxidoreductase activity, acting on single donors with incorporation of molecular oxygen, incorporation of two atoms of oxygen"/>
    <property type="evidence" value="ECO:0007669"/>
    <property type="project" value="TreeGrafter"/>
</dbReference>
<dbReference type="GO" id="GO:0004601">
    <property type="term" value="F:peroxidase activity"/>
    <property type="evidence" value="ECO:0007669"/>
    <property type="project" value="UniProtKB-KW"/>
</dbReference>
<dbReference type="GO" id="GO:0004666">
    <property type="term" value="F:prostaglandin-endoperoxide synthase activity"/>
    <property type="evidence" value="ECO:0000250"/>
    <property type="project" value="UniProtKB"/>
</dbReference>
<dbReference type="GO" id="GO:0042803">
    <property type="term" value="F:protein homodimerization activity"/>
    <property type="evidence" value="ECO:0007669"/>
    <property type="project" value="Ensembl"/>
</dbReference>
<dbReference type="GO" id="GO:0050873">
    <property type="term" value="P:brown fat cell differentiation"/>
    <property type="evidence" value="ECO:0007669"/>
    <property type="project" value="Ensembl"/>
</dbReference>
<dbReference type="GO" id="GO:0071498">
    <property type="term" value="P:cellular response to fluid shear stress"/>
    <property type="evidence" value="ECO:0007669"/>
    <property type="project" value="Ensembl"/>
</dbReference>
<dbReference type="GO" id="GO:0071456">
    <property type="term" value="P:cellular response to hypoxia"/>
    <property type="evidence" value="ECO:0007669"/>
    <property type="project" value="Ensembl"/>
</dbReference>
<dbReference type="GO" id="GO:0071471">
    <property type="term" value="P:cellular response to non-ionic osmotic stress"/>
    <property type="evidence" value="ECO:0007669"/>
    <property type="project" value="Ensembl"/>
</dbReference>
<dbReference type="GO" id="GO:0019371">
    <property type="term" value="P:cyclooxygenase pathway"/>
    <property type="evidence" value="ECO:0000250"/>
    <property type="project" value="UniProtKB"/>
</dbReference>
<dbReference type="GO" id="GO:0046697">
    <property type="term" value="P:decidualization"/>
    <property type="evidence" value="ECO:0007669"/>
    <property type="project" value="Ensembl"/>
</dbReference>
<dbReference type="GO" id="GO:0007566">
    <property type="term" value="P:embryo implantation"/>
    <property type="evidence" value="ECO:0007669"/>
    <property type="project" value="Ensembl"/>
</dbReference>
<dbReference type="GO" id="GO:1902219">
    <property type="term" value="P:negative regulation of intrinsic apoptotic signaling pathway in response to osmotic stress"/>
    <property type="evidence" value="ECO:0007669"/>
    <property type="project" value="Ensembl"/>
</dbReference>
<dbReference type="GO" id="GO:0090336">
    <property type="term" value="P:positive regulation of brown fat cell differentiation"/>
    <property type="evidence" value="ECO:0007669"/>
    <property type="project" value="Ensembl"/>
</dbReference>
<dbReference type="GO" id="GO:0031622">
    <property type="term" value="P:positive regulation of fever generation"/>
    <property type="evidence" value="ECO:0007669"/>
    <property type="project" value="Ensembl"/>
</dbReference>
<dbReference type="GO" id="GO:0031394">
    <property type="term" value="P:positive regulation of prostaglandin biosynthetic process"/>
    <property type="evidence" value="ECO:0007669"/>
    <property type="project" value="Ensembl"/>
</dbReference>
<dbReference type="GO" id="GO:0001516">
    <property type="term" value="P:prostaglandin biosynthetic process"/>
    <property type="evidence" value="ECO:0000250"/>
    <property type="project" value="UniProtKB"/>
</dbReference>
<dbReference type="GO" id="GO:0032310">
    <property type="term" value="P:prostaglandin secretion"/>
    <property type="evidence" value="ECO:0007669"/>
    <property type="project" value="Ensembl"/>
</dbReference>
<dbReference type="GO" id="GO:0008217">
    <property type="term" value="P:regulation of blood pressure"/>
    <property type="evidence" value="ECO:0000250"/>
    <property type="project" value="UniProtKB"/>
</dbReference>
<dbReference type="GO" id="GO:0042127">
    <property type="term" value="P:regulation of cell population proliferation"/>
    <property type="evidence" value="ECO:0007669"/>
    <property type="project" value="Ensembl"/>
</dbReference>
<dbReference type="GO" id="GO:0150077">
    <property type="term" value="P:regulation of neuroinflammatory response"/>
    <property type="evidence" value="ECO:0000250"/>
    <property type="project" value="UniProtKB"/>
</dbReference>
<dbReference type="GO" id="GO:0009624">
    <property type="term" value="P:response to nematode"/>
    <property type="evidence" value="ECO:0007669"/>
    <property type="project" value="Ensembl"/>
</dbReference>
<dbReference type="GO" id="GO:0006979">
    <property type="term" value="P:response to oxidative stress"/>
    <property type="evidence" value="ECO:0007669"/>
    <property type="project" value="InterPro"/>
</dbReference>
<dbReference type="GO" id="GO:0010269">
    <property type="term" value="P:response to selenium ion"/>
    <property type="evidence" value="ECO:0007669"/>
    <property type="project" value="Ensembl"/>
</dbReference>
<dbReference type="CDD" id="cd00054">
    <property type="entry name" value="EGF_CA"/>
    <property type="match status" value="1"/>
</dbReference>
<dbReference type="CDD" id="cd09816">
    <property type="entry name" value="prostaglandin_endoperoxide_synthase"/>
    <property type="match status" value="1"/>
</dbReference>
<dbReference type="FunFam" id="1.10.640.10:FF:000002">
    <property type="entry name" value="Prostaglandin G/H synthase 2"/>
    <property type="match status" value="1"/>
</dbReference>
<dbReference type="FunFam" id="2.10.25.10:FF:000235">
    <property type="entry name" value="Prostaglandin G/H synthase 2"/>
    <property type="match status" value="1"/>
</dbReference>
<dbReference type="Gene3D" id="1.10.640.10">
    <property type="entry name" value="Haem peroxidase domain superfamily, animal type"/>
    <property type="match status" value="1"/>
</dbReference>
<dbReference type="Gene3D" id="2.10.25.10">
    <property type="entry name" value="Laminin"/>
    <property type="match status" value="1"/>
</dbReference>
<dbReference type="InterPro" id="IPR000742">
    <property type="entry name" value="EGF-like_dom"/>
</dbReference>
<dbReference type="InterPro" id="IPR019791">
    <property type="entry name" value="Haem_peroxidase_animal"/>
</dbReference>
<dbReference type="InterPro" id="IPR010255">
    <property type="entry name" value="Haem_peroxidase_sf"/>
</dbReference>
<dbReference type="InterPro" id="IPR037120">
    <property type="entry name" value="Haem_peroxidase_sf_animal"/>
</dbReference>
<dbReference type="InterPro" id="IPR050783">
    <property type="entry name" value="Oxylipin_biosynth_metab"/>
</dbReference>
<dbReference type="PANTHER" id="PTHR11903">
    <property type="entry name" value="PROSTAGLANDIN G/H SYNTHASE"/>
    <property type="match status" value="1"/>
</dbReference>
<dbReference type="PANTHER" id="PTHR11903:SF8">
    <property type="entry name" value="PROSTAGLANDIN G_H SYNTHASE 2"/>
    <property type="match status" value="1"/>
</dbReference>
<dbReference type="Pfam" id="PF03098">
    <property type="entry name" value="An_peroxidase"/>
    <property type="match status" value="2"/>
</dbReference>
<dbReference type="PRINTS" id="PR00457">
    <property type="entry name" value="ANPEROXIDASE"/>
</dbReference>
<dbReference type="SUPFAM" id="SSF57196">
    <property type="entry name" value="EGF/Laminin"/>
    <property type="match status" value="1"/>
</dbReference>
<dbReference type="SUPFAM" id="SSF48113">
    <property type="entry name" value="Heme-dependent peroxidases"/>
    <property type="match status" value="1"/>
</dbReference>
<dbReference type="PROSITE" id="PS50026">
    <property type="entry name" value="EGF_3"/>
    <property type="match status" value="1"/>
</dbReference>
<dbReference type="PROSITE" id="PS50292">
    <property type="entry name" value="PEROXIDASE_3"/>
    <property type="match status" value="1"/>
</dbReference>
<reference key="1">
    <citation type="journal article" date="1997" name="Am. J. Physiol.">
        <title>Cloning, expression, and regulation of rabbit cyclooxygenase-2 in renal medullary interstitial cells.</title>
        <authorList>
            <person name="Guan Y."/>
            <person name="Chang M."/>
            <person name="Cho W."/>
            <person name="Zhang Y."/>
            <person name="Redha R."/>
            <person name="Davis L."/>
            <person name="Chang S."/>
            <person name="Dubois R.N."/>
            <person name="Hao C.M."/>
            <person name="Breyer M."/>
        </authorList>
    </citation>
    <scope>NUCLEOTIDE SEQUENCE [MRNA]</scope>
    <source>
        <strain>New Zealand white</strain>
    </source>
</reference>
<name>PGH2_RABIT</name>
<proteinExistence type="evidence at transcript level"/>
<accession>O02768</accession>
<feature type="signal peptide" evidence="1">
    <location>
        <begin position="1"/>
        <end position="17"/>
    </location>
</feature>
<feature type="chain" id="PRO_0000023878" description="Prostaglandin G/H synthase 2">
    <location>
        <begin position="18"/>
        <end position="604"/>
    </location>
</feature>
<feature type="domain" description="EGF-like" evidence="6">
    <location>
        <begin position="18"/>
        <end position="55"/>
    </location>
</feature>
<feature type="active site" description="Proton acceptor" evidence="7">
    <location>
        <position position="193"/>
    </location>
</feature>
<feature type="active site" description="For cyclooxygenase activity" evidence="4">
    <location>
        <position position="371"/>
    </location>
</feature>
<feature type="binding site" evidence="4">
    <location>
        <position position="106"/>
    </location>
    <ligand>
        <name>substrate</name>
    </ligand>
</feature>
<feature type="binding site" evidence="4">
    <location>
        <position position="341"/>
    </location>
    <ligand>
        <name>substrate</name>
    </ligand>
</feature>
<feature type="binding site" description="axial binding residue" evidence="7">
    <location>
        <position position="374"/>
    </location>
    <ligand>
        <name>heme b</name>
        <dbReference type="ChEBI" id="CHEBI:60344"/>
    </ligand>
    <ligandPart>
        <name>Fe</name>
        <dbReference type="ChEBI" id="CHEBI:18248"/>
    </ligandPart>
</feature>
<feature type="site" description="Aspirin-acetylated serine" evidence="2">
    <location>
        <position position="516"/>
    </location>
</feature>
<feature type="modified residue" description="S-nitrosocysteine" evidence="2">
    <location>
        <position position="526"/>
    </location>
</feature>
<feature type="modified residue" description="O-acetylserine" evidence="4">
    <location>
        <position position="565"/>
    </location>
</feature>
<feature type="glycosylation site" description="N-linked (GlcNAc...) asparagine" evidence="5">
    <location>
        <position position="53"/>
    </location>
</feature>
<feature type="glycosylation site" description="N-linked (GlcNAc...) asparagine" evidence="5">
    <location>
        <position position="130"/>
    </location>
</feature>
<feature type="glycosylation site" description="N-linked (GlcNAc...) asparagine" evidence="5">
    <location>
        <position position="396"/>
    </location>
</feature>
<feature type="glycosylation site" description="N-linked (GlcNAc...) asparagine" evidence="5">
    <location>
        <position position="580"/>
    </location>
</feature>
<feature type="disulfide bond" evidence="4">
    <location>
        <begin position="21"/>
        <end position="32"/>
    </location>
</feature>
<feature type="disulfide bond" evidence="4">
    <location>
        <begin position="22"/>
        <end position="145"/>
    </location>
</feature>
<feature type="disulfide bond" evidence="4">
    <location>
        <begin position="26"/>
        <end position="42"/>
    </location>
</feature>
<feature type="disulfide bond" evidence="4">
    <location>
        <begin position="44"/>
        <end position="54"/>
    </location>
</feature>
<feature type="disulfide bond" evidence="4">
    <location>
        <begin position="555"/>
        <end position="561"/>
    </location>
</feature>
<organism>
    <name type="scientific">Oryctolagus cuniculus</name>
    <name type="common">Rabbit</name>
    <dbReference type="NCBI Taxonomy" id="9986"/>
    <lineage>
        <taxon>Eukaryota</taxon>
        <taxon>Metazoa</taxon>
        <taxon>Chordata</taxon>
        <taxon>Craniata</taxon>
        <taxon>Vertebrata</taxon>
        <taxon>Euteleostomi</taxon>
        <taxon>Mammalia</taxon>
        <taxon>Eutheria</taxon>
        <taxon>Euarchontoglires</taxon>
        <taxon>Glires</taxon>
        <taxon>Lagomorpha</taxon>
        <taxon>Leporidae</taxon>
        <taxon>Oryctolagus</taxon>
    </lineage>
</organism>
<evidence type="ECO:0000250" key="1"/>
<evidence type="ECO:0000250" key="2">
    <source>
        <dbReference type="UniProtKB" id="P35354"/>
    </source>
</evidence>
<evidence type="ECO:0000250" key="3">
    <source>
        <dbReference type="UniProtKB" id="P79208"/>
    </source>
</evidence>
<evidence type="ECO:0000250" key="4">
    <source>
        <dbReference type="UniProtKB" id="Q05769"/>
    </source>
</evidence>
<evidence type="ECO:0000255" key="5"/>
<evidence type="ECO:0000255" key="6">
    <source>
        <dbReference type="PROSITE-ProRule" id="PRU00076"/>
    </source>
</evidence>
<evidence type="ECO:0000255" key="7">
    <source>
        <dbReference type="PROSITE-ProRule" id="PRU00298"/>
    </source>
</evidence>
<evidence type="ECO:0000305" key="8"/>
<keyword id="KW-0007">Acetylation</keyword>
<keyword id="KW-0223">Dioxygenase</keyword>
<keyword id="KW-1015">Disulfide bond</keyword>
<keyword id="KW-0256">Endoplasmic reticulum</keyword>
<keyword id="KW-0275">Fatty acid biosynthesis</keyword>
<keyword id="KW-0276">Fatty acid metabolism</keyword>
<keyword id="KW-0325">Glycoprotein</keyword>
<keyword id="KW-0349">Heme</keyword>
<keyword id="KW-0408">Iron</keyword>
<keyword id="KW-0444">Lipid biosynthesis</keyword>
<keyword id="KW-0443">Lipid metabolism</keyword>
<keyword id="KW-0472">Membrane</keyword>
<keyword id="KW-0479">Metal-binding</keyword>
<keyword id="KW-0492">Microsome</keyword>
<keyword id="KW-0539">Nucleus</keyword>
<keyword id="KW-0560">Oxidoreductase</keyword>
<keyword id="KW-0575">Peroxidase</keyword>
<keyword id="KW-0643">Prostaglandin biosynthesis</keyword>
<keyword id="KW-0644">Prostaglandin metabolism</keyword>
<keyword id="KW-1185">Reference proteome</keyword>
<keyword id="KW-0702">S-nitrosylation</keyword>
<keyword id="KW-0732">Signal</keyword>
<protein>
    <recommendedName>
        <fullName>Prostaglandin G/H synthase 2</fullName>
        <ecNumber>1.14.99.1</ecNumber>
    </recommendedName>
    <alternativeName>
        <fullName>Cyclooxygenase-2</fullName>
        <shortName>COX-2</shortName>
    </alternativeName>
    <alternativeName>
        <fullName>PHS II</fullName>
    </alternativeName>
    <alternativeName>
        <fullName>Prostaglandin H2 synthase 2</fullName>
        <shortName>PGH synthase 2</shortName>
        <shortName>PGHS-2</shortName>
    </alternativeName>
    <alternativeName>
        <fullName>Prostaglandin-endoperoxide synthase 2</fullName>
    </alternativeName>
</protein>
<gene>
    <name type="primary">PTGS2</name>
    <name type="synonym">COX-2</name>
    <name type="synonym">COX2</name>
</gene>
<sequence>MLARALLLCAAVALSHAANPCCSNPCQNRGVCMTMGFDQYKCDCTRTGFYGENCSTPEFLTRIKLLLKPTPDTVHYILTHFKGVWNIVNSIPFLRNSIMKYVLTSRSHMIDSPPTYNVHYNYKSWEAFSNLSYYTRALPPVADDCPTPMGVKGKKELPDSKDVVEKLLLRRKFIPDPQGTNMMFAFFAQHFTHQFFKTDLKRGPAFTKGLGHGVDLNHIYGETLDRQHKLRLFKDGKMKYQVIDGEVYPPTVKDTQVEMIYPPHIPAHLQFAVGQEVFGLVPGLMMYATIWLREHNRVCDVLKQEHPEWDDEQLFQTSRLILIGETIKIVIEDYVQHLSGYHFKLKFDPELLFNQQFQYQNRIAAEFNTLYHWHPLLPDTFQIDDQQYNYQQFLYNNSILLEHGLTQFVESFTRQIAGRVAGGRNVPPAVQKVAKASIDQSRQMKYQSLNEYRKRFLLKPYESFEELTGEKEMAAELEALYGDIDAVELYPALLVERPRPDAIFGESMVEMGAPFSLKGLMGNPICSPNYWKPSTFGGEVGFKIVNTASIQSLICNNVKGCPFTSFNVPDPQLTKTVTINASASHSRLEDINPTVLLKGRSTEL</sequence>
<comment type="function">
    <text evidence="2 3 4">Dual cyclooxygenase and peroxidase in the biosynthesis pathway of prostanoids, a class of C20 oxylipins mainly derived from arachidonate ((5Z,8Z,11Z,14Z)-eicosatetraenoate, AA, C20:4(n-6)), with a particular role in the inflammatory response. The cyclooxygenase activity oxygenates AA to the hydroperoxy endoperoxide prostaglandin G2 (PGG2), and the peroxidase activity reduces PGG2 to the hydroxy endoperoxide prostaglandin H2 (PGH2), the precursor of all 2-series prostaglandins and thromboxanes. This complex transformation is initiated by abstraction of hydrogen at carbon 13 (with S-stereochemistry), followed by insertion of molecular O2 to form the endoperoxide bridge between carbon 9 and 11 that defines prostaglandins. The insertion of a second molecule of O2 (bis-oxygenase activity) yields a hydroperoxy group in PGG2 that is then reduced to PGH2 by two electrons. Similarly catalyzes successive cyclooxygenation and peroxidation of dihomo-gamma-linoleate (DGLA, C20:3(n-6)) and eicosapentaenoate (EPA, C20:5(n-3)) to corresponding PGH1 and PGH3, the precursors of 1- and 3-series prostaglandins. In an alternative pathway of prostanoid biosynthesis, converts 2-arachidonoyl lysophopholipids to prostanoid lysophopholipids, which are then hydrolyzed by intracellular phospholipases to release free prostanoids. Metabolizes 2-arachidonoyl glycerol yielding the glyceryl ester of PGH2, a process that can contribute to pain response. Generates lipid mediators from n-3 and n-6 polyunsaturated fatty acids (PUFAs) via a lipoxygenase-type mechanism. Oxygenates PUFAs to hydroperoxy compounds and then reduces them to corresponding alcohols. Plays a role in the generation of resolution phase interaction products (resolvins) during both sterile and infectious inflammation. Metabolizes docosahexaenoate (DHA, C22:6(n-3)) to 17R-HDHA, a precursor of the D-series resolvins (RvDs). As a component of the biosynthetic pathway of E-series resolvins (RvEs), converts eicosapentaenoate (EPA, C20:5(n-3)) primarily to 18S-HEPE that is further metabolized by ALOX5 and LTA4H to generate 18S-RvE1 and 18S-RvE2. In vascular endothelial cells, converts docosapentaenoate (DPA, C22:5(n-3)) to 13R-HDPA, a precursor for 13-series resolvins (RvTs) shown to activate macrophage phagocytosis during bacterial infection. In activated leukocytes, contributes to oxygenation of hydroxyeicosatetraenoates (HETE) to diHETES (5,15-diHETE and 5,11-diHETE). Can also use linoleate (LA, (9Z,12Z)-octadecadienoate, C18:2(n-6)) as substrate and produce hydroxyoctadecadienoates (HODEs) in a regio- and stereospecific manner,being (9R)-HODE ((9R)-hydroxy-(10E,12Z)-octadecadienoate) and (13S)-HODE ((13S)-hydroxy-(9Z,11E)-octadecadienoate) its major products (By similarity). During neuroinflammation, plays a role in neuronal secretion of specialized preresolving mediators (SPMs) 15R-lipoxin A4 that regulates phagocytic microglia (By similarity).</text>
</comment>
<comment type="catalytic activity">
    <reaction evidence="2">
        <text>(5Z,8Z,11Z,14Z)-eicosatetraenoate + AH2 + 2 O2 = prostaglandin H2 + A + H2O</text>
        <dbReference type="Rhea" id="RHEA:23728"/>
        <dbReference type="ChEBI" id="CHEBI:13193"/>
        <dbReference type="ChEBI" id="CHEBI:15377"/>
        <dbReference type="ChEBI" id="CHEBI:15379"/>
        <dbReference type="ChEBI" id="CHEBI:17499"/>
        <dbReference type="ChEBI" id="CHEBI:32395"/>
        <dbReference type="ChEBI" id="CHEBI:57405"/>
        <dbReference type="EC" id="1.14.99.1"/>
    </reaction>
    <physiologicalReaction direction="left-to-right" evidence="2">
        <dbReference type="Rhea" id="RHEA:23729"/>
    </physiologicalReaction>
</comment>
<comment type="catalytic activity">
    <reaction evidence="2">
        <text>(5Z,8Z,11Z,14Z)-eicosatetraenoate + 2 O2 = prostaglandin G2</text>
        <dbReference type="Rhea" id="RHEA:42596"/>
        <dbReference type="ChEBI" id="CHEBI:15379"/>
        <dbReference type="ChEBI" id="CHEBI:32395"/>
        <dbReference type="ChEBI" id="CHEBI:82629"/>
    </reaction>
    <physiologicalReaction direction="left-to-right" evidence="2">
        <dbReference type="Rhea" id="RHEA:42597"/>
    </physiologicalReaction>
</comment>
<comment type="catalytic activity">
    <reaction evidence="2">
        <text>prostaglandin G2 + AH2 = prostaglandin H2 + A + H2O</text>
        <dbReference type="Rhea" id="RHEA:42600"/>
        <dbReference type="ChEBI" id="CHEBI:13193"/>
        <dbReference type="ChEBI" id="CHEBI:15377"/>
        <dbReference type="ChEBI" id="CHEBI:17499"/>
        <dbReference type="ChEBI" id="CHEBI:57405"/>
        <dbReference type="ChEBI" id="CHEBI:82629"/>
    </reaction>
    <physiologicalReaction direction="left-to-right" evidence="2">
        <dbReference type="Rhea" id="RHEA:42601"/>
    </physiologicalReaction>
</comment>
<comment type="catalytic activity">
    <reaction evidence="2">
        <text>(5Z,8Z,11Z,14Z,17Z)-eicosapentaenoate + 2 O2 = prostaglandin G3</text>
        <dbReference type="Rhea" id="RHEA:50444"/>
        <dbReference type="ChEBI" id="CHEBI:15379"/>
        <dbReference type="ChEBI" id="CHEBI:58562"/>
        <dbReference type="ChEBI" id="CHEBI:133133"/>
    </reaction>
    <physiologicalReaction direction="left-to-right" evidence="2">
        <dbReference type="Rhea" id="RHEA:50445"/>
    </physiologicalReaction>
</comment>
<comment type="catalytic activity">
    <reaction evidence="2">
        <text>prostaglandin G3 + AH2 = prostaglandin H3 + A + H2O</text>
        <dbReference type="Rhea" id="RHEA:50448"/>
        <dbReference type="ChEBI" id="CHEBI:13193"/>
        <dbReference type="ChEBI" id="CHEBI:15377"/>
        <dbReference type="ChEBI" id="CHEBI:17499"/>
        <dbReference type="ChEBI" id="CHEBI:133133"/>
        <dbReference type="ChEBI" id="CHEBI:133134"/>
    </reaction>
    <physiologicalReaction direction="left-to-right" evidence="2">
        <dbReference type="Rhea" id="RHEA:50449"/>
    </physiologicalReaction>
</comment>
<comment type="catalytic activity">
    <reaction evidence="2">
        <text>(8Z,11Z,14Z)-eicosatrienoate + 2 O2 = prostaglandin G1</text>
        <dbReference type="Rhea" id="RHEA:50424"/>
        <dbReference type="ChEBI" id="CHEBI:15379"/>
        <dbReference type="ChEBI" id="CHEBI:71589"/>
        <dbReference type="ChEBI" id="CHEBI:133084"/>
    </reaction>
    <physiologicalReaction direction="left-to-right" evidence="2">
        <dbReference type="Rhea" id="RHEA:50425"/>
    </physiologicalReaction>
</comment>
<comment type="catalytic activity">
    <reaction evidence="2">
        <text>prostaglandin G1 + AH2 = prostaglandin H1 + A + H2O</text>
        <dbReference type="Rhea" id="RHEA:50432"/>
        <dbReference type="ChEBI" id="CHEBI:13193"/>
        <dbReference type="ChEBI" id="CHEBI:15377"/>
        <dbReference type="ChEBI" id="CHEBI:17499"/>
        <dbReference type="ChEBI" id="CHEBI:90793"/>
        <dbReference type="ChEBI" id="CHEBI:133084"/>
    </reaction>
    <physiologicalReaction direction="left-to-right" evidence="2">
        <dbReference type="Rhea" id="RHEA:50433"/>
    </physiologicalReaction>
</comment>
<comment type="catalytic activity">
    <reaction evidence="2">
        <text>2-(5Z,8Z,11Z,14Z)-eicosatetraenoyl-sn-glycero-3-phosphoethanolamine + 2 O2 = 2-(prostaglandin G2)-sn-glycero-3-phosphoethanolamine</text>
        <dbReference type="Rhea" id="RHEA:54204"/>
        <dbReference type="ChEBI" id="CHEBI:15379"/>
        <dbReference type="ChEBI" id="CHEBI:76091"/>
        <dbReference type="ChEBI" id="CHEBI:138098"/>
    </reaction>
    <physiologicalReaction direction="left-to-right" evidence="2">
        <dbReference type="Rhea" id="RHEA:54205"/>
    </physiologicalReaction>
</comment>
<comment type="catalytic activity">
    <reaction evidence="2">
        <text>2-(prostaglandin G2)-sn-glycero-3-phosphoethanolamine + AH2 = 2-(prostaglandin H2)-sn-glycero-3-phosphoethanolamine + A + H2O</text>
        <dbReference type="Rhea" id="RHEA:54208"/>
        <dbReference type="ChEBI" id="CHEBI:13193"/>
        <dbReference type="ChEBI" id="CHEBI:15377"/>
        <dbReference type="ChEBI" id="CHEBI:17499"/>
        <dbReference type="ChEBI" id="CHEBI:138098"/>
        <dbReference type="ChEBI" id="CHEBI:138099"/>
    </reaction>
    <physiologicalReaction direction="left-to-right" evidence="2">
        <dbReference type="Rhea" id="RHEA:54209"/>
    </physiologicalReaction>
</comment>
<comment type="catalytic activity">
    <reaction evidence="2">
        <text>2-(5Z,8Z,11Z,14Z)-eicosatetraenoyl-sn-glycero-3-phosphocholine + 2 O2 = 2-(prostaglandin G2)-sn-glycero-3-phosphocholine</text>
        <dbReference type="Rhea" id="RHEA:54212"/>
        <dbReference type="ChEBI" id="CHEBI:15379"/>
        <dbReference type="ChEBI" id="CHEBI:76079"/>
        <dbReference type="ChEBI" id="CHEBI:138100"/>
    </reaction>
    <physiologicalReaction direction="left-to-right" evidence="2">
        <dbReference type="Rhea" id="RHEA:54213"/>
    </physiologicalReaction>
</comment>
<comment type="catalytic activity">
    <reaction evidence="2">
        <text>2-(prostaglandin G2)-sn-glycero-3-phosphocholine + AH2 = 2-(prostaglandin H2)-sn-glycero-3-phosphocholine + A + H2O</text>
        <dbReference type="Rhea" id="RHEA:54216"/>
        <dbReference type="ChEBI" id="CHEBI:13193"/>
        <dbReference type="ChEBI" id="CHEBI:15377"/>
        <dbReference type="ChEBI" id="CHEBI:17499"/>
        <dbReference type="ChEBI" id="CHEBI:138100"/>
        <dbReference type="ChEBI" id="CHEBI:138101"/>
    </reaction>
    <physiologicalReaction direction="left-to-right" evidence="2">
        <dbReference type="Rhea" id="RHEA:54217"/>
    </physiologicalReaction>
</comment>
<comment type="catalytic activity">
    <reaction evidence="2">
        <text>(15S)-hydroperoxy-(5Z,8Z,11Z,13E)-eicosatetraenoate + AH2 = (15S)-hydroxy-(5Z,8Z,11Z,13E)-eicosatetraenoate + A + H2O</text>
        <dbReference type="Rhea" id="RHEA:48856"/>
        <dbReference type="ChEBI" id="CHEBI:13193"/>
        <dbReference type="ChEBI" id="CHEBI:15377"/>
        <dbReference type="ChEBI" id="CHEBI:17499"/>
        <dbReference type="ChEBI" id="CHEBI:57409"/>
        <dbReference type="ChEBI" id="CHEBI:57446"/>
    </reaction>
    <physiologicalReaction direction="left-to-right" evidence="2">
        <dbReference type="Rhea" id="RHEA:48857"/>
    </physiologicalReaction>
</comment>
<comment type="catalytic activity">
    <reaction evidence="2">
        <text>2-(5Z,8Z,11Z,14Z)-eicosatetraenoyl-sn-glycero-3-phosphocholine + AH2 + O2 = 2-[(15S)-hydroxy-(5Z,8Z,11Z,13E)-eicosatetraenoyl]-sn-glycero-3-phosphocholine + A + H2O</text>
        <dbReference type="Rhea" id="RHEA:53684"/>
        <dbReference type="ChEBI" id="CHEBI:13193"/>
        <dbReference type="ChEBI" id="CHEBI:15377"/>
        <dbReference type="ChEBI" id="CHEBI:15379"/>
        <dbReference type="ChEBI" id="CHEBI:17499"/>
        <dbReference type="ChEBI" id="CHEBI:76079"/>
        <dbReference type="ChEBI" id="CHEBI:137584"/>
    </reaction>
    <physiologicalReaction direction="left-to-right" evidence="2">
        <dbReference type="Rhea" id="RHEA:53685"/>
    </physiologicalReaction>
</comment>
<comment type="catalytic activity">
    <reaction evidence="2">
        <text>2-(5Z,8Z,11Z,14Z)-eicosatetraenoyl-sn-glycero-3-phosphocholine + AH2 + O2 = 2-[(15R)-hydroxy-(5Z,8Z,11Z,13E)-eicosatetraenoyl]-sn-glycero-3-phosphocholine + A + H2O</text>
        <dbReference type="Rhea" id="RHEA:53680"/>
        <dbReference type="ChEBI" id="CHEBI:13193"/>
        <dbReference type="ChEBI" id="CHEBI:15377"/>
        <dbReference type="ChEBI" id="CHEBI:15379"/>
        <dbReference type="ChEBI" id="CHEBI:17499"/>
        <dbReference type="ChEBI" id="CHEBI:76079"/>
        <dbReference type="ChEBI" id="CHEBI:137583"/>
    </reaction>
    <physiologicalReaction direction="left-to-right" evidence="2">
        <dbReference type="Rhea" id="RHEA:53681"/>
    </physiologicalReaction>
</comment>
<comment type="catalytic activity">
    <reaction evidence="2">
        <text>2-(5Z,8Z,11Z,14Z)-eicosatetraenoyl-sn-glycero-3-phosphocholine + AH2 + O2 = 2-[(11R)-hydroxy-(5Z,8Z,12E,14Z)-eicosatetraenoyl]-sn-glycero-3-phosphocholine + A + H2O</text>
        <dbReference type="Rhea" id="RHEA:53676"/>
        <dbReference type="ChEBI" id="CHEBI:13193"/>
        <dbReference type="ChEBI" id="CHEBI:15377"/>
        <dbReference type="ChEBI" id="CHEBI:15379"/>
        <dbReference type="ChEBI" id="CHEBI:17499"/>
        <dbReference type="ChEBI" id="CHEBI:76079"/>
        <dbReference type="ChEBI" id="CHEBI:137582"/>
    </reaction>
    <physiologicalReaction direction="left-to-right" evidence="2">
        <dbReference type="Rhea" id="RHEA:53677"/>
    </physiologicalReaction>
</comment>
<comment type="catalytic activity">
    <reaction evidence="2">
        <text>(9Z,12Z)-octadecadienoate + AH2 + O2 = 9-hydroxy-(10E,12Z)-octadecadienoate + A + H2O</text>
        <dbReference type="Rhea" id="RHEA:50864"/>
        <dbReference type="ChEBI" id="CHEBI:13193"/>
        <dbReference type="ChEBI" id="CHEBI:15377"/>
        <dbReference type="ChEBI" id="CHEBI:15379"/>
        <dbReference type="ChEBI" id="CHEBI:17499"/>
        <dbReference type="ChEBI" id="CHEBI:30245"/>
        <dbReference type="ChEBI" id="CHEBI:133820"/>
    </reaction>
    <physiologicalReaction direction="left-to-right" evidence="2">
        <dbReference type="Rhea" id="RHEA:50865"/>
    </physiologicalReaction>
</comment>
<comment type="catalytic activity">
    <reaction evidence="2">
        <text>(9Z,12Z)-octadecadienoate + AH2 + O2 = 13-hydroxy-(9Z,11E)-octadecadienoate + A + H2O</text>
        <dbReference type="Rhea" id="RHEA:50860"/>
        <dbReference type="ChEBI" id="CHEBI:13193"/>
        <dbReference type="ChEBI" id="CHEBI:15377"/>
        <dbReference type="ChEBI" id="CHEBI:15379"/>
        <dbReference type="ChEBI" id="CHEBI:17499"/>
        <dbReference type="ChEBI" id="CHEBI:30245"/>
        <dbReference type="ChEBI" id="CHEBI:133819"/>
    </reaction>
    <physiologicalReaction direction="left-to-right" evidence="2">
        <dbReference type="Rhea" id="RHEA:50861"/>
    </physiologicalReaction>
</comment>
<comment type="catalytic activity">
    <reaction evidence="2">
        <text>(5Z,8Z,11Z,14Z)-eicosatetraenoate + AH2 + O2 = (15R)-hydroxy-(5Z,8Z,11Z,13E)-eicosatetraenoate + A + H2O</text>
        <dbReference type="Rhea" id="RHEA:50856"/>
        <dbReference type="ChEBI" id="CHEBI:13193"/>
        <dbReference type="ChEBI" id="CHEBI:15377"/>
        <dbReference type="ChEBI" id="CHEBI:15379"/>
        <dbReference type="ChEBI" id="CHEBI:17499"/>
        <dbReference type="ChEBI" id="CHEBI:32395"/>
        <dbReference type="ChEBI" id="CHEBI:78837"/>
    </reaction>
    <physiologicalReaction direction="left-to-right" evidence="2">
        <dbReference type="Rhea" id="RHEA:50857"/>
    </physiologicalReaction>
</comment>
<comment type="catalytic activity">
    <reaction evidence="2">
        <text>(5Z,8Z,11Z,14Z)-eicosatetraenoate + AH2 + O2 = (11R)-hydroxy-(5Z,8Z,12E,14Z)-eicosatetraenoate + A + H2O</text>
        <dbReference type="Rhea" id="RHEA:50852"/>
        <dbReference type="ChEBI" id="CHEBI:13193"/>
        <dbReference type="ChEBI" id="CHEBI:15377"/>
        <dbReference type="ChEBI" id="CHEBI:15379"/>
        <dbReference type="ChEBI" id="CHEBI:17499"/>
        <dbReference type="ChEBI" id="CHEBI:32395"/>
        <dbReference type="ChEBI" id="CHEBI:78836"/>
    </reaction>
    <physiologicalReaction direction="left-to-right" evidence="2">
        <dbReference type="Rhea" id="RHEA:50853"/>
    </physiologicalReaction>
</comment>
<comment type="catalytic activity">
    <reaction evidence="2">
        <text>(5Z,8Z,11Z,14Z,17Z)-eicosapentaenoate + AH2 + O2 = (11R)-hydroxy-(5Z,8Z,12E,14Z,17Z)-eicosapentaenoate + A + H2O</text>
        <dbReference type="Rhea" id="RHEA:50848"/>
        <dbReference type="ChEBI" id="CHEBI:13193"/>
        <dbReference type="ChEBI" id="CHEBI:15377"/>
        <dbReference type="ChEBI" id="CHEBI:15379"/>
        <dbReference type="ChEBI" id="CHEBI:17499"/>
        <dbReference type="ChEBI" id="CHEBI:58562"/>
        <dbReference type="ChEBI" id="CHEBI:90820"/>
    </reaction>
    <physiologicalReaction direction="left-to-right" evidence="2">
        <dbReference type="Rhea" id="RHEA:50849"/>
    </physiologicalReaction>
</comment>
<comment type="catalytic activity">
    <reaction evidence="2">
        <text>(5Z,8Z,11Z,14Z,17Z)-eicosapentaenoate + AH2 + O2 = (18S)-hydroxy-(5Z,8Z,11Z,14Z,16E)-eicosapentaenoate + A + H2O</text>
        <dbReference type="Rhea" id="RHEA:50200"/>
        <dbReference type="ChEBI" id="CHEBI:13193"/>
        <dbReference type="ChEBI" id="CHEBI:15377"/>
        <dbReference type="ChEBI" id="CHEBI:15379"/>
        <dbReference type="ChEBI" id="CHEBI:17499"/>
        <dbReference type="ChEBI" id="CHEBI:58562"/>
        <dbReference type="ChEBI" id="CHEBI:132083"/>
    </reaction>
    <physiologicalReaction direction="left-to-right" evidence="2">
        <dbReference type="Rhea" id="RHEA:50201"/>
    </physiologicalReaction>
</comment>
<comment type="catalytic activity">
    <reaction evidence="2">
        <text>(5Z,8Z,11Z,14Z,17Z)-eicosapentaenoate + AH2 + O2 = (18R)-hydroxy-(5Z,8Z,11Z,14Z,16E)-eicosapentaenoate + A + H2O</text>
        <dbReference type="Rhea" id="RHEA:48836"/>
        <dbReference type="ChEBI" id="CHEBI:13193"/>
        <dbReference type="ChEBI" id="CHEBI:15377"/>
        <dbReference type="ChEBI" id="CHEBI:15379"/>
        <dbReference type="ChEBI" id="CHEBI:17499"/>
        <dbReference type="ChEBI" id="CHEBI:58562"/>
        <dbReference type="ChEBI" id="CHEBI:90818"/>
    </reaction>
    <physiologicalReaction direction="left-to-right" evidence="2">
        <dbReference type="Rhea" id="RHEA:48837"/>
    </physiologicalReaction>
</comment>
<comment type="catalytic activity">
    <reaction evidence="2">
        <text>(5Z,8Z,11Z,14Z,17Z)-eicosapentaenoate + AH2 + O2 = (15R)-hydroxy-(5Z,8Z,11Z,13E,17Z)-eicosapentaenoate + A + H2O</text>
        <dbReference type="Rhea" id="RHEA:48840"/>
        <dbReference type="ChEBI" id="CHEBI:13193"/>
        <dbReference type="ChEBI" id="CHEBI:15377"/>
        <dbReference type="ChEBI" id="CHEBI:15379"/>
        <dbReference type="ChEBI" id="CHEBI:17499"/>
        <dbReference type="ChEBI" id="CHEBI:58562"/>
        <dbReference type="ChEBI" id="CHEBI:90819"/>
    </reaction>
    <physiologicalReaction direction="left-to-right" evidence="2">
        <dbReference type="Rhea" id="RHEA:48841"/>
    </physiologicalReaction>
</comment>
<comment type="catalytic activity">
    <reaction evidence="2">
        <text>(5Z,8Z,11Z,14Z,17Z)-eicosapentaenoate + AH2 + O2 = (15S)-hydroxy-(5Z,8Z,11Z,13E,17Z)-eicosapentaenoate + A + H2O</text>
        <dbReference type="Rhea" id="RHEA:50196"/>
        <dbReference type="ChEBI" id="CHEBI:13193"/>
        <dbReference type="ChEBI" id="CHEBI:15377"/>
        <dbReference type="ChEBI" id="CHEBI:15379"/>
        <dbReference type="ChEBI" id="CHEBI:17499"/>
        <dbReference type="ChEBI" id="CHEBI:58562"/>
        <dbReference type="ChEBI" id="CHEBI:132087"/>
    </reaction>
    <physiologicalReaction direction="left-to-right" evidence="2">
        <dbReference type="Rhea" id="RHEA:50197"/>
    </physiologicalReaction>
</comment>
<comment type="catalytic activity">
    <reaction evidence="2">
        <text>(7Z,10Z,13Z,16Z,19Z)-docosapentaenoate + AH2 + O2 = 13R-hydroxy-(7Z,10Z,14E,16Z,19Z)-docosapentaenoate + A + H2O</text>
        <dbReference type="Rhea" id="RHEA:48852"/>
        <dbReference type="ChEBI" id="CHEBI:13193"/>
        <dbReference type="ChEBI" id="CHEBI:15377"/>
        <dbReference type="ChEBI" id="CHEBI:15379"/>
        <dbReference type="ChEBI" id="CHEBI:17499"/>
        <dbReference type="ChEBI" id="CHEBI:77224"/>
        <dbReference type="ChEBI" id="CHEBI:90824"/>
    </reaction>
    <physiologicalReaction direction="left-to-right" evidence="2">
        <dbReference type="Rhea" id="RHEA:48853"/>
    </physiologicalReaction>
</comment>
<comment type="catalytic activity">
    <reaction evidence="2">
        <text>(4Z,7Z,10Z,13Z,16Z,19Z)-docosahexaenoate + AH2 + O2 = 13-hydroxy-(4Z,7Z,10Z,14E,16Z,19Z)-docosahexaenoate + A + H2O</text>
        <dbReference type="Rhea" id="RHEA:48820"/>
        <dbReference type="ChEBI" id="CHEBI:13193"/>
        <dbReference type="ChEBI" id="CHEBI:15377"/>
        <dbReference type="ChEBI" id="CHEBI:15379"/>
        <dbReference type="ChEBI" id="CHEBI:17499"/>
        <dbReference type="ChEBI" id="CHEBI:77016"/>
        <dbReference type="ChEBI" id="CHEBI:90815"/>
    </reaction>
    <physiologicalReaction direction="left-to-right" evidence="2">
        <dbReference type="Rhea" id="RHEA:48821"/>
    </physiologicalReaction>
</comment>
<comment type="catalytic activity">
    <reaction evidence="2">
        <text>(5S)-hydroxy-(6E,8Z,11Z,14Z)-eicosatetraenoate + AH2 + O2 = (5S,15R)-dihydroxy-(6E,8Z,11Z,13E)-eicosatetraenoate + A + H2O</text>
        <dbReference type="Rhea" id="RHEA:48812"/>
        <dbReference type="ChEBI" id="CHEBI:13193"/>
        <dbReference type="ChEBI" id="CHEBI:15377"/>
        <dbReference type="ChEBI" id="CHEBI:15379"/>
        <dbReference type="ChEBI" id="CHEBI:17499"/>
        <dbReference type="ChEBI" id="CHEBI:90632"/>
        <dbReference type="ChEBI" id="CHEBI:90812"/>
    </reaction>
    <physiologicalReaction direction="left-to-right" evidence="2">
        <dbReference type="Rhea" id="RHEA:48813"/>
    </physiologicalReaction>
</comment>
<comment type="catalytic activity">
    <reaction evidence="2">
        <text>(4Z,7Z,10Z,13Z,16Z,19Z)-docosahexaenoate + AH2 + O2 = 17R-hydroxy-(4Z,7Z,10Z,13Z,15E,19Z)-docosahexaenoate + A + H2O</text>
        <dbReference type="Rhea" id="RHEA:48816"/>
        <dbReference type="ChEBI" id="CHEBI:13193"/>
        <dbReference type="ChEBI" id="CHEBI:15377"/>
        <dbReference type="ChEBI" id="CHEBI:15379"/>
        <dbReference type="ChEBI" id="CHEBI:17499"/>
        <dbReference type="ChEBI" id="CHEBI:77016"/>
        <dbReference type="ChEBI" id="CHEBI:90814"/>
    </reaction>
    <physiologicalReaction direction="left-to-right" evidence="2">
        <dbReference type="Rhea" id="RHEA:48817"/>
    </physiologicalReaction>
</comment>
<comment type="catalytic activity">
    <reaction evidence="2">
        <text>(5S)-hydroxy-(6E,8Z,11Z,14Z)-eicosatetraenoate + AH2 + O2 = (5S,15S)-dihydroxy-(6E,8Z,11Z,13E)-eicosatetraenoate + A + H2O</text>
        <dbReference type="Rhea" id="RHEA:48808"/>
        <dbReference type="ChEBI" id="CHEBI:13193"/>
        <dbReference type="ChEBI" id="CHEBI:15377"/>
        <dbReference type="ChEBI" id="CHEBI:15379"/>
        <dbReference type="ChEBI" id="CHEBI:17499"/>
        <dbReference type="ChEBI" id="CHEBI:90632"/>
        <dbReference type="ChEBI" id="CHEBI:90813"/>
    </reaction>
    <physiologicalReaction direction="left-to-right" evidence="2">
        <dbReference type="Rhea" id="RHEA:48809"/>
    </physiologicalReaction>
</comment>
<comment type="catalytic activity">
    <reaction evidence="2">
        <text>(5S)-hydroxy-(6E,8Z,11Z,14Z)-eicosatetraenoate + AH2 + O2 = (5S,11R)-dihydroxy-(6E,8Z,12E,14Z)-eicosatetraenoate + A + H2O</text>
        <dbReference type="Rhea" id="RHEA:48804"/>
        <dbReference type="ChEBI" id="CHEBI:13193"/>
        <dbReference type="ChEBI" id="CHEBI:15377"/>
        <dbReference type="ChEBI" id="CHEBI:15379"/>
        <dbReference type="ChEBI" id="CHEBI:17499"/>
        <dbReference type="ChEBI" id="CHEBI:90632"/>
        <dbReference type="ChEBI" id="CHEBI:90810"/>
    </reaction>
    <physiologicalReaction direction="left-to-right" evidence="2">
        <dbReference type="Rhea" id="RHEA:48805"/>
    </physiologicalReaction>
</comment>
<comment type="catalytic activity">
    <reaction evidence="2">
        <text>2-(5Z,8Z,11Z,14Z-eicosatetraenoyl)-glycerol + 2 O2 = 2-glyceryl-prostaglandin G2</text>
        <dbReference type="Rhea" id="RHEA:45288"/>
        <dbReference type="ChEBI" id="CHEBI:15379"/>
        <dbReference type="ChEBI" id="CHEBI:52392"/>
        <dbReference type="ChEBI" id="CHEBI:85165"/>
    </reaction>
    <physiologicalReaction direction="left-to-right" evidence="2">
        <dbReference type="Rhea" id="RHEA:45289"/>
    </physiologicalReaction>
</comment>
<comment type="catalytic activity">
    <reaction evidence="2">
        <text>2-glyceryl-prostaglandin G2 + AH2 = 2-glyceryl-prostaglandin H2 + A + H2O</text>
        <dbReference type="Rhea" id="RHEA:45292"/>
        <dbReference type="ChEBI" id="CHEBI:13193"/>
        <dbReference type="ChEBI" id="CHEBI:15377"/>
        <dbReference type="ChEBI" id="CHEBI:17499"/>
        <dbReference type="ChEBI" id="CHEBI:85165"/>
        <dbReference type="ChEBI" id="CHEBI:85166"/>
    </reaction>
    <physiologicalReaction direction="left-to-right" evidence="2">
        <dbReference type="Rhea" id="RHEA:45293"/>
    </physiologicalReaction>
</comment>
<comment type="catalytic activity">
    <reaction evidence="2">
        <text>(5Z,8Z,11Z,14Z)-eicosatetraenoate + O2 = (15R)-hydroperoxy-(5Z,8Z,11Z,13E)-eicosatetraenoate</text>
        <dbReference type="Rhea" id="RHEA:42284"/>
        <dbReference type="ChEBI" id="CHEBI:15379"/>
        <dbReference type="ChEBI" id="CHEBI:32395"/>
        <dbReference type="ChEBI" id="CHEBI:82626"/>
    </reaction>
    <physiologicalReaction direction="left-to-right" evidence="2">
        <dbReference type="Rhea" id="RHEA:42285"/>
    </physiologicalReaction>
</comment>
<comment type="catalytic activity">
    <reaction evidence="2">
        <text>(5Z,8Z,11Z,14Z)-eicosatetraenoate + O2 = 11R-hydroperoxy-(5Z,8Z,12E,14Z)-eicosatetraenoate</text>
        <dbReference type="Rhea" id="RHEA:42280"/>
        <dbReference type="ChEBI" id="CHEBI:15379"/>
        <dbReference type="ChEBI" id="CHEBI:32395"/>
        <dbReference type="ChEBI" id="CHEBI:82628"/>
    </reaction>
    <physiologicalReaction direction="left-to-right" evidence="2">
        <dbReference type="Rhea" id="RHEA:42281"/>
    </physiologicalReaction>
</comment>
<comment type="catalytic activity">
    <reaction evidence="3">
        <text>(9Z,12Z)-octadecadienoate + AH2 + O2 = (9R)-hydroxy-(10E,12Z)-octadecadienoate + A + H2O</text>
        <dbReference type="Rhea" id="RHEA:75447"/>
        <dbReference type="ChEBI" id="CHEBI:13193"/>
        <dbReference type="ChEBI" id="CHEBI:15377"/>
        <dbReference type="ChEBI" id="CHEBI:15379"/>
        <dbReference type="ChEBI" id="CHEBI:17499"/>
        <dbReference type="ChEBI" id="CHEBI:30245"/>
        <dbReference type="ChEBI" id="CHEBI:77895"/>
    </reaction>
    <physiologicalReaction direction="left-to-right" evidence="3">
        <dbReference type="Rhea" id="RHEA:75448"/>
    </physiologicalReaction>
</comment>
<comment type="catalytic activity">
    <reaction evidence="3">
        <text>(9Z,12Z)-octadecadienoate + AH2 + O2 = (9S)-hydroxy-(10E,12Z)-octadecadienoate + A + H2O</text>
        <dbReference type="Rhea" id="RHEA:75459"/>
        <dbReference type="ChEBI" id="CHEBI:13193"/>
        <dbReference type="ChEBI" id="CHEBI:15377"/>
        <dbReference type="ChEBI" id="CHEBI:15379"/>
        <dbReference type="ChEBI" id="CHEBI:17499"/>
        <dbReference type="ChEBI" id="CHEBI:30245"/>
        <dbReference type="ChEBI" id="CHEBI:77852"/>
    </reaction>
    <physiologicalReaction direction="left-to-right" evidence="3">
        <dbReference type="Rhea" id="RHEA:75460"/>
    </physiologicalReaction>
</comment>
<comment type="catalytic activity">
    <reaction evidence="3">
        <text>(9Z,12Z)-octadecadienoate + AH2 + O2 = (13S)-hydroxy-(9Z,11E)-octadecadienoate + A + H2O</text>
        <dbReference type="Rhea" id="RHEA:75451"/>
        <dbReference type="ChEBI" id="CHEBI:13193"/>
        <dbReference type="ChEBI" id="CHEBI:15377"/>
        <dbReference type="ChEBI" id="CHEBI:15379"/>
        <dbReference type="ChEBI" id="CHEBI:17499"/>
        <dbReference type="ChEBI" id="CHEBI:30245"/>
        <dbReference type="ChEBI" id="CHEBI:90850"/>
    </reaction>
    <physiologicalReaction direction="left-to-right" evidence="3">
        <dbReference type="Rhea" id="RHEA:75452"/>
    </physiologicalReaction>
</comment>
<comment type="catalytic activity">
    <reaction evidence="3">
        <text>(9Z,12Z)-octadecadienoate + AH2 + O2 = (13R)-hydroxy-(9Z,11E)-octadecadienoate + A + H2O</text>
        <dbReference type="Rhea" id="RHEA:75455"/>
        <dbReference type="ChEBI" id="CHEBI:13193"/>
        <dbReference type="ChEBI" id="CHEBI:15377"/>
        <dbReference type="ChEBI" id="CHEBI:15379"/>
        <dbReference type="ChEBI" id="CHEBI:17499"/>
        <dbReference type="ChEBI" id="CHEBI:30245"/>
        <dbReference type="ChEBI" id="CHEBI:136655"/>
    </reaction>
    <physiologicalReaction direction="left-to-right" evidence="3">
        <dbReference type="Rhea" id="RHEA:75456"/>
    </physiologicalReaction>
</comment>
<comment type="cofactor">
    <cofactor evidence="4">
        <name>heme b</name>
        <dbReference type="ChEBI" id="CHEBI:60344"/>
    </cofactor>
    <text evidence="4">Binds 1 heme b (iron(II)-protoporphyrin IX) group per subunit.</text>
</comment>
<comment type="pathway">
    <text evidence="2">Lipid metabolism; prostaglandin biosynthesis.</text>
</comment>
<comment type="subunit">
    <text evidence="4">Homodimer.</text>
</comment>
<comment type="subcellular location">
    <subcellularLocation>
        <location evidence="2">Microsome membrane</location>
        <topology evidence="2">Peripheral membrane protein</topology>
    </subcellularLocation>
    <subcellularLocation>
        <location evidence="2">Endoplasmic reticulum membrane</location>
        <topology evidence="2">Peripheral membrane protein</topology>
    </subcellularLocation>
    <subcellularLocation>
        <location evidence="2">Nucleus inner membrane</location>
        <topology evidence="2">Peripheral membrane protein</topology>
    </subcellularLocation>
    <subcellularLocation>
        <location evidence="2">Nucleus outer membrane</location>
        <topology evidence="2">Peripheral membrane protein</topology>
    </subcellularLocation>
    <text evidence="2">Detected on the lumenal side of the endoplasmic reticulum and nuclear envelope.</text>
</comment>
<comment type="tissue specificity">
    <text>Highest expression in kidney and urinary bladder.</text>
</comment>
<comment type="PTM">
    <text evidence="2">S-nitrosylation by NOS2 (iNOS) activates enzyme activity. S-nitrosylation may take place on different Cys residues in addition to Cys-526.</text>
</comment>
<comment type="PTM">
    <text evidence="4">Acetylated at Ser-565 by SPHK1. During neuroinflammation, acetylation by SPHK1 promotes neuronal secretion of specialized preresolving mediators (SPMs), especially 15-R-lipoxin A4, which results in an increase of phagocytic microglia.</text>
</comment>
<comment type="miscellaneous">
    <text>The conversion of arachidonate to prostaglandin H2 is a 2 step reaction: a cyclooxygenase (COX) reaction which converts arachidonate to prostaglandin G2 (PGG2) and a peroxidase reaction in which PGG2 is reduced to prostaglandin H2 (PGH2). The cyclooxygenase reaction occurs in a hydrophobic channel in the core of the enzyme. The peroxidase reaction occurs at a heme-containing active site located near the protein surface. The nonsteroidal anti-inflammatory drugs (NSAIDs) binding site corresponds to the cyclooxygenase active site.</text>
</comment>
<comment type="miscellaneous">
    <text>Conversion of arachidonate to prostaglandin H2 is mediated by 2 different isozymes: the constitutive PTGS1 and the inducible PTGS2. PTGS1 is expressed constitutively and generally produces prostanoids acutely in response to hormonal stimuli to fine-tune physiological processes requiring instantaneous, continuous regulation (e.g. hemostasis). PTGS2 is inducible and typically produces prostanoids that mediate responses to physiological stresses such as infection and inflammation.</text>
</comment>
<comment type="miscellaneous">
    <text>PTGS1 and PTGS2 are the targets of nonsteroidal anti-inflammatory drugs (NSAIDs) including aspirin and ibuprofen. Aspirin is able to produce an irreversible inactivation of the enzyme through a serine acetylation. Inhibition of the PGHSs with NSAIDs acutely reduces inflammation, pain, and fever, and long-term use of these drugs reduces fatal thrombotic events, as well as the development of colon cancer and Alzheimer's disease. PTGS2 is the principal isozyme responsible for production of inflammatory prostaglandins. New generation PTGSs inhibitors strive to be selective for PTGS2, to avoid side effects such as gastrointestinal complications and ulceration.</text>
</comment>
<comment type="similarity">
    <text evidence="8">Belongs to the prostaglandin G/H synthase family.</text>
</comment>